<organism>
    <name type="scientific">Salmonella paratyphi A (strain ATCC 9150 / SARB42)</name>
    <dbReference type="NCBI Taxonomy" id="295319"/>
    <lineage>
        <taxon>Bacteria</taxon>
        <taxon>Pseudomonadati</taxon>
        <taxon>Pseudomonadota</taxon>
        <taxon>Gammaproteobacteria</taxon>
        <taxon>Enterobacterales</taxon>
        <taxon>Enterobacteriaceae</taxon>
        <taxon>Salmonella</taxon>
    </lineage>
</organism>
<comment type="function">
    <text evidence="1">IGPS catalyzes the conversion of PRFAR and glutamine to IGP, AICAR and glutamate. The HisH subunit catalyzes the hydrolysis of glutamine to glutamate and ammonia as part of the synthesis of IGP and AICAR. The resulting ammonia molecule is channeled to the active site of HisF.</text>
</comment>
<comment type="catalytic activity">
    <reaction evidence="1">
        <text>5-[(5-phospho-1-deoxy-D-ribulos-1-ylimino)methylamino]-1-(5-phospho-beta-D-ribosyl)imidazole-4-carboxamide + L-glutamine = D-erythro-1-(imidazol-4-yl)glycerol 3-phosphate + 5-amino-1-(5-phospho-beta-D-ribosyl)imidazole-4-carboxamide + L-glutamate + H(+)</text>
        <dbReference type="Rhea" id="RHEA:24793"/>
        <dbReference type="ChEBI" id="CHEBI:15378"/>
        <dbReference type="ChEBI" id="CHEBI:29985"/>
        <dbReference type="ChEBI" id="CHEBI:58278"/>
        <dbReference type="ChEBI" id="CHEBI:58359"/>
        <dbReference type="ChEBI" id="CHEBI:58475"/>
        <dbReference type="ChEBI" id="CHEBI:58525"/>
        <dbReference type="EC" id="4.3.2.10"/>
    </reaction>
</comment>
<comment type="catalytic activity">
    <reaction evidence="1">
        <text>L-glutamine + H2O = L-glutamate + NH4(+)</text>
        <dbReference type="Rhea" id="RHEA:15889"/>
        <dbReference type="ChEBI" id="CHEBI:15377"/>
        <dbReference type="ChEBI" id="CHEBI:28938"/>
        <dbReference type="ChEBI" id="CHEBI:29985"/>
        <dbReference type="ChEBI" id="CHEBI:58359"/>
        <dbReference type="EC" id="3.5.1.2"/>
    </reaction>
</comment>
<comment type="pathway">
    <text evidence="1">Amino-acid biosynthesis; L-histidine biosynthesis; L-histidine from 5-phospho-alpha-D-ribose 1-diphosphate: step 5/9.</text>
</comment>
<comment type="subunit">
    <text evidence="1">Heterodimer of HisH and HisF.</text>
</comment>
<comment type="subcellular location">
    <subcellularLocation>
        <location evidence="1">Cytoplasm</location>
    </subcellularLocation>
</comment>
<keyword id="KW-0028">Amino-acid biosynthesis</keyword>
<keyword id="KW-0963">Cytoplasm</keyword>
<keyword id="KW-0315">Glutamine amidotransferase</keyword>
<keyword id="KW-0368">Histidine biosynthesis</keyword>
<keyword id="KW-0378">Hydrolase</keyword>
<keyword id="KW-0456">Lyase</keyword>
<gene>
    <name evidence="1" type="primary">hisH</name>
    <name type="ordered locus">SPA0796</name>
</gene>
<protein>
    <recommendedName>
        <fullName evidence="1">Imidazole glycerol phosphate synthase subunit HisH</fullName>
        <ecNumber evidence="1">4.3.2.10</ecNumber>
    </recommendedName>
    <alternativeName>
        <fullName evidence="1">IGP synthase glutaminase subunit</fullName>
        <ecNumber evidence="1">3.5.1.2</ecNumber>
    </alternativeName>
    <alternativeName>
        <fullName evidence="1">IGP synthase subunit HisH</fullName>
    </alternativeName>
    <alternativeName>
        <fullName evidence="1">ImGP synthase subunit HisH</fullName>
        <shortName evidence="1">IGPS subunit HisH</shortName>
    </alternativeName>
</protein>
<proteinExistence type="inferred from homology"/>
<evidence type="ECO:0000255" key="1">
    <source>
        <dbReference type="HAMAP-Rule" id="MF_00278"/>
    </source>
</evidence>
<sequence length="196" mass="21704">MNVVILDTGCANLSSVKSAVARHGYTPVVSREAEIVLRADKLFLPGVGTAQAAMDQLRERELIDLIKACTQPVLGICLGMQLLGRRSEETRGVDLLNIIEQDVPKMTDFGLPLPHMGWNRVYPQAGNRLFQGIEDGAYFYFVHSYAMPVNPWTIAQCNYGEPFTAAVQKDNFFGVQFHPERSGAAGAQLLKNFLEM</sequence>
<accession>Q5PDP6</accession>
<name>HIS5_SALPA</name>
<reference key="1">
    <citation type="journal article" date="2004" name="Nat. Genet.">
        <title>Comparison of genome degradation in Paratyphi A and Typhi, human-restricted serovars of Salmonella enterica that cause typhoid.</title>
        <authorList>
            <person name="McClelland M."/>
            <person name="Sanderson K.E."/>
            <person name="Clifton S.W."/>
            <person name="Latreille P."/>
            <person name="Porwollik S."/>
            <person name="Sabo A."/>
            <person name="Meyer R."/>
            <person name="Bieri T."/>
            <person name="Ozersky P."/>
            <person name="McLellan M."/>
            <person name="Harkins C.R."/>
            <person name="Wang C."/>
            <person name="Nguyen C."/>
            <person name="Berghoff A."/>
            <person name="Elliott G."/>
            <person name="Kohlberg S."/>
            <person name="Strong C."/>
            <person name="Du F."/>
            <person name="Carter J."/>
            <person name="Kremizki C."/>
            <person name="Layman D."/>
            <person name="Leonard S."/>
            <person name="Sun H."/>
            <person name="Fulton L."/>
            <person name="Nash W."/>
            <person name="Miner T."/>
            <person name="Minx P."/>
            <person name="Delehaunty K."/>
            <person name="Fronick C."/>
            <person name="Magrini V."/>
            <person name="Nhan M."/>
            <person name="Warren W."/>
            <person name="Florea L."/>
            <person name="Spieth J."/>
            <person name="Wilson R.K."/>
        </authorList>
    </citation>
    <scope>NUCLEOTIDE SEQUENCE [LARGE SCALE GENOMIC DNA]</scope>
    <source>
        <strain>ATCC 9150 / SARB42</strain>
    </source>
</reference>
<feature type="chain" id="PRO_0000231756" description="Imidazole glycerol phosphate synthase subunit HisH">
    <location>
        <begin position="1"/>
        <end position="196"/>
    </location>
</feature>
<feature type="domain" description="Glutamine amidotransferase type-1" evidence="1">
    <location>
        <begin position="2"/>
        <end position="196"/>
    </location>
</feature>
<feature type="active site" description="Nucleophile" evidence="1">
    <location>
        <position position="77"/>
    </location>
</feature>
<feature type="active site" evidence="1">
    <location>
        <position position="178"/>
    </location>
</feature>
<feature type="active site" evidence="1">
    <location>
        <position position="180"/>
    </location>
</feature>
<dbReference type="EC" id="4.3.2.10" evidence="1"/>
<dbReference type="EC" id="3.5.1.2" evidence="1"/>
<dbReference type="EMBL" id="CP000026">
    <property type="protein sequence ID" value="AAV76789.1"/>
    <property type="molecule type" value="Genomic_DNA"/>
</dbReference>
<dbReference type="RefSeq" id="WP_001103591.1">
    <property type="nucleotide sequence ID" value="NC_006511.1"/>
</dbReference>
<dbReference type="SMR" id="Q5PDP6"/>
<dbReference type="KEGG" id="spt:SPA0796"/>
<dbReference type="HOGENOM" id="CLU_071837_0_0_6"/>
<dbReference type="UniPathway" id="UPA00031">
    <property type="reaction ID" value="UER00010"/>
</dbReference>
<dbReference type="Proteomes" id="UP000008185">
    <property type="component" value="Chromosome"/>
</dbReference>
<dbReference type="GO" id="GO:0005737">
    <property type="term" value="C:cytoplasm"/>
    <property type="evidence" value="ECO:0007669"/>
    <property type="project" value="UniProtKB-SubCell"/>
</dbReference>
<dbReference type="GO" id="GO:0004359">
    <property type="term" value="F:glutaminase activity"/>
    <property type="evidence" value="ECO:0007669"/>
    <property type="project" value="UniProtKB-EC"/>
</dbReference>
<dbReference type="GO" id="GO:0000107">
    <property type="term" value="F:imidazoleglycerol-phosphate synthase activity"/>
    <property type="evidence" value="ECO:0007669"/>
    <property type="project" value="UniProtKB-UniRule"/>
</dbReference>
<dbReference type="GO" id="GO:0016829">
    <property type="term" value="F:lyase activity"/>
    <property type="evidence" value="ECO:0007669"/>
    <property type="project" value="UniProtKB-KW"/>
</dbReference>
<dbReference type="GO" id="GO:0000105">
    <property type="term" value="P:L-histidine biosynthetic process"/>
    <property type="evidence" value="ECO:0007669"/>
    <property type="project" value="UniProtKB-UniRule"/>
</dbReference>
<dbReference type="CDD" id="cd01748">
    <property type="entry name" value="GATase1_IGP_Synthase"/>
    <property type="match status" value="1"/>
</dbReference>
<dbReference type="FunFam" id="3.40.50.880:FF:000009">
    <property type="entry name" value="Imidazole glycerol phosphate synthase subunit HisH"/>
    <property type="match status" value="1"/>
</dbReference>
<dbReference type="Gene3D" id="3.40.50.880">
    <property type="match status" value="1"/>
</dbReference>
<dbReference type="HAMAP" id="MF_00278">
    <property type="entry name" value="HisH"/>
    <property type="match status" value="1"/>
</dbReference>
<dbReference type="InterPro" id="IPR029062">
    <property type="entry name" value="Class_I_gatase-like"/>
</dbReference>
<dbReference type="InterPro" id="IPR017926">
    <property type="entry name" value="GATASE"/>
</dbReference>
<dbReference type="InterPro" id="IPR010139">
    <property type="entry name" value="Imidazole-glycPsynth_HisH"/>
</dbReference>
<dbReference type="NCBIfam" id="TIGR01855">
    <property type="entry name" value="IMP_synth_hisH"/>
    <property type="match status" value="1"/>
</dbReference>
<dbReference type="PANTHER" id="PTHR42701">
    <property type="entry name" value="IMIDAZOLE GLYCEROL PHOSPHATE SYNTHASE SUBUNIT HISH"/>
    <property type="match status" value="1"/>
</dbReference>
<dbReference type="PANTHER" id="PTHR42701:SF1">
    <property type="entry name" value="IMIDAZOLE GLYCEROL PHOSPHATE SYNTHASE SUBUNIT HISH"/>
    <property type="match status" value="1"/>
</dbReference>
<dbReference type="Pfam" id="PF00117">
    <property type="entry name" value="GATase"/>
    <property type="match status" value="1"/>
</dbReference>
<dbReference type="PIRSF" id="PIRSF000495">
    <property type="entry name" value="Amidotransf_hisH"/>
    <property type="match status" value="1"/>
</dbReference>
<dbReference type="PRINTS" id="PR00096">
    <property type="entry name" value="GATASE"/>
</dbReference>
<dbReference type="SUPFAM" id="SSF52317">
    <property type="entry name" value="Class I glutamine amidotransferase-like"/>
    <property type="match status" value="1"/>
</dbReference>
<dbReference type="PROSITE" id="PS51273">
    <property type="entry name" value="GATASE_TYPE_1"/>
    <property type="match status" value="1"/>
</dbReference>